<comment type="function">
    <text evidence="1">ATP-dependent specificity component of the Clp protease. It directs the protease to specific substrates. Can perform chaperone functions in the absence of ClpP.</text>
</comment>
<comment type="subunit">
    <text evidence="1">Component of the ClpX-ClpP complex. Forms a hexameric ring that, in the presence of ATP, binds to fourteen ClpP subunits assembled into a disk-like structure with a central cavity, resembling the structure of eukaryotic proteasomes.</text>
</comment>
<comment type="similarity">
    <text evidence="1">Belongs to the ClpX chaperone family.</text>
</comment>
<name>CLPX_RHOCS</name>
<evidence type="ECO:0000255" key="1">
    <source>
        <dbReference type="HAMAP-Rule" id="MF_00175"/>
    </source>
</evidence>
<evidence type="ECO:0000255" key="2">
    <source>
        <dbReference type="PROSITE-ProRule" id="PRU01250"/>
    </source>
</evidence>
<feature type="chain" id="PRO_1000097990" description="ATP-dependent Clp protease ATP-binding subunit ClpX">
    <location>
        <begin position="1"/>
        <end position="421"/>
    </location>
</feature>
<feature type="domain" description="ClpX-type ZB" evidence="2">
    <location>
        <begin position="3"/>
        <end position="56"/>
    </location>
</feature>
<feature type="binding site" evidence="2">
    <location>
        <position position="15"/>
    </location>
    <ligand>
        <name>Zn(2+)</name>
        <dbReference type="ChEBI" id="CHEBI:29105"/>
    </ligand>
</feature>
<feature type="binding site" evidence="2">
    <location>
        <position position="18"/>
    </location>
    <ligand>
        <name>Zn(2+)</name>
        <dbReference type="ChEBI" id="CHEBI:29105"/>
    </ligand>
</feature>
<feature type="binding site" evidence="2">
    <location>
        <position position="37"/>
    </location>
    <ligand>
        <name>Zn(2+)</name>
        <dbReference type="ChEBI" id="CHEBI:29105"/>
    </ligand>
</feature>
<feature type="binding site" evidence="2">
    <location>
        <position position="40"/>
    </location>
    <ligand>
        <name>Zn(2+)</name>
        <dbReference type="ChEBI" id="CHEBI:29105"/>
    </ligand>
</feature>
<feature type="binding site" evidence="1">
    <location>
        <begin position="119"/>
        <end position="126"/>
    </location>
    <ligand>
        <name>ATP</name>
        <dbReference type="ChEBI" id="CHEBI:30616"/>
    </ligand>
</feature>
<protein>
    <recommendedName>
        <fullName evidence="1">ATP-dependent Clp protease ATP-binding subunit ClpX</fullName>
    </recommendedName>
</protein>
<organism>
    <name type="scientific">Rhodospirillum centenum (strain ATCC 51521 / SW)</name>
    <dbReference type="NCBI Taxonomy" id="414684"/>
    <lineage>
        <taxon>Bacteria</taxon>
        <taxon>Pseudomonadati</taxon>
        <taxon>Pseudomonadota</taxon>
        <taxon>Alphaproteobacteria</taxon>
        <taxon>Rhodospirillales</taxon>
        <taxon>Rhodospirillaceae</taxon>
        <taxon>Rhodospirillum</taxon>
    </lineage>
</organism>
<accession>B6ISY6</accession>
<dbReference type="EMBL" id="CP000613">
    <property type="protein sequence ID" value="ACI98657.1"/>
    <property type="molecule type" value="Genomic_DNA"/>
</dbReference>
<dbReference type="RefSeq" id="WP_012566445.1">
    <property type="nucleotide sequence ID" value="NC_011420.2"/>
</dbReference>
<dbReference type="SMR" id="B6ISY6"/>
<dbReference type="STRING" id="414684.RC1_1247"/>
<dbReference type="KEGG" id="rce:RC1_1247"/>
<dbReference type="eggNOG" id="COG1219">
    <property type="taxonomic scope" value="Bacteria"/>
</dbReference>
<dbReference type="HOGENOM" id="CLU_014218_8_2_5"/>
<dbReference type="OrthoDB" id="9804062at2"/>
<dbReference type="Proteomes" id="UP000001591">
    <property type="component" value="Chromosome"/>
</dbReference>
<dbReference type="GO" id="GO:0009376">
    <property type="term" value="C:HslUV protease complex"/>
    <property type="evidence" value="ECO:0007669"/>
    <property type="project" value="TreeGrafter"/>
</dbReference>
<dbReference type="GO" id="GO:0005524">
    <property type="term" value="F:ATP binding"/>
    <property type="evidence" value="ECO:0007669"/>
    <property type="project" value="UniProtKB-UniRule"/>
</dbReference>
<dbReference type="GO" id="GO:0016887">
    <property type="term" value="F:ATP hydrolysis activity"/>
    <property type="evidence" value="ECO:0007669"/>
    <property type="project" value="InterPro"/>
</dbReference>
<dbReference type="GO" id="GO:0140662">
    <property type="term" value="F:ATP-dependent protein folding chaperone"/>
    <property type="evidence" value="ECO:0007669"/>
    <property type="project" value="InterPro"/>
</dbReference>
<dbReference type="GO" id="GO:0046983">
    <property type="term" value="F:protein dimerization activity"/>
    <property type="evidence" value="ECO:0007669"/>
    <property type="project" value="InterPro"/>
</dbReference>
<dbReference type="GO" id="GO:0051082">
    <property type="term" value="F:unfolded protein binding"/>
    <property type="evidence" value="ECO:0007669"/>
    <property type="project" value="UniProtKB-UniRule"/>
</dbReference>
<dbReference type="GO" id="GO:0008270">
    <property type="term" value="F:zinc ion binding"/>
    <property type="evidence" value="ECO:0007669"/>
    <property type="project" value="InterPro"/>
</dbReference>
<dbReference type="GO" id="GO:0051301">
    <property type="term" value="P:cell division"/>
    <property type="evidence" value="ECO:0007669"/>
    <property type="project" value="TreeGrafter"/>
</dbReference>
<dbReference type="GO" id="GO:0051603">
    <property type="term" value="P:proteolysis involved in protein catabolic process"/>
    <property type="evidence" value="ECO:0007669"/>
    <property type="project" value="TreeGrafter"/>
</dbReference>
<dbReference type="CDD" id="cd19497">
    <property type="entry name" value="RecA-like_ClpX"/>
    <property type="match status" value="1"/>
</dbReference>
<dbReference type="FunFam" id="1.10.8.60:FF:000002">
    <property type="entry name" value="ATP-dependent Clp protease ATP-binding subunit ClpX"/>
    <property type="match status" value="1"/>
</dbReference>
<dbReference type="FunFam" id="3.40.50.300:FF:000005">
    <property type="entry name" value="ATP-dependent Clp protease ATP-binding subunit ClpX"/>
    <property type="match status" value="1"/>
</dbReference>
<dbReference type="Gene3D" id="1.10.8.60">
    <property type="match status" value="1"/>
</dbReference>
<dbReference type="Gene3D" id="6.20.220.10">
    <property type="entry name" value="ClpX chaperone, C4-type zinc finger domain"/>
    <property type="match status" value="1"/>
</dbReference>
<dbReference type="Gene3D" id="3.40.50.300">
    <property type="entry name" value="P-loop containing nucleotide triphosphate hydrolases"/>
    <property type="match status" value="1"/>
</dbReference>
<dbReference type="HAMAP" id="MF_00175">
    <property type="entry name" value="ClpX"/>
    <property type="match status" value="1"/>
</dbReference>
<dbReference type="InterPro" id="IPR003593">
    <property type="entry name" value="AAA+_ATPase"/>
</dbReference>
<dbReference type="InterPro" id="IPR050052">
    <property type="entry name" value="ATP-dep_Clp_protease_ClpX"/>
</dbReference>
<dbReference type="InterPro" id="IPR003959">
    <property type="entry name" value="ATPase_AAA_core"/>
</dbReference>
<dbReference type="InterPro" id="IPR019489">
    <property type="entry name" value="Clp_ATPase_C"/>
</dbReference>
<dbReference type="InterPro" id="IPR004487">
    <property type="entry name" value="Clp_protease_ATP-bd_su_ClpX"/>
</dbReference>
<dbReference type="InterPro" id="IPR046425">
    <property type="entry name" value="ClpX_bact"/>
</dbReference>
<dbReference type="InterPro" id="IPR027417">
    <property type="entry name" value="P-loop_NTPase"/>
</dbReference>
<dbReference type="InterPro" id="IPR010603">
    <property type="entry name" value="Znf_CppX_C4"/>
</dbReference>
<dbReference type="InterPro" id="IPR038366">
    <property type="entry name" value="Znf_CppX_C4_sf"/>
</dbReference>
<dbReference type="NCBIfam" id="TIGR00382">
    <property type="entry name" value="clpX"/>
    <property type="match status" value="1"/>
</dbReference>
<dbReference type="NCBIfam" id="NF003745">
    <property type="entry name" value="PRK05342.1"/>
    <property type="match status" value="1"/>
</dbReference>
<dbReference type="PANTHER" id="PTHR48102:SF7">
    <property type="entry name" value="ATP-DEPENDENT CLP PROTEASE ATP-BINDING SUBUNIT CLPX-LIKE, MITOCHONDRIAL"/>
    <property type="match status" value="1"/>
</dbReference>
<dbReference type="PANTHER" id="PTHR48102">
    <property type="entry name" value="ATP-DEPENDENT CLP PROTEASE ATP-BINDING SUBUNIT CLPX-LIKE, MITOCHONDRIAL-RELATED"/>
    <property type="match status" value="1"/>
</dbReference>
<dbReference type="Pfam" id="PF07724">
    <property type="entry name" value="AAA_2"/>
    <property type="match status" value="1"/>
</dbReference>
<dbReference type="Pfam" id="PF10431">
    <property type="entry name" value="ClpB_D2-small"/>
    <property type="match status" value="1"/>
</dbReference>
<dbReference type="Pfam" id="PF06689">
    <property type="entry name" value="zf-C4_ClpX"/>
    <property type="match status" value="1"/>
</dbReference>
<dbReference type="SMART" id="SM00382">
    <property type="entry name" value="AAA"/>
    <property type="match status" value="1"/>
</dbReference>
<dbReference type="SMART" id="SM01086">
    <property type="entry name" value="ClpB_D2-small"/>
    <property type="match status" value="1"/>
</dbReference>
<dbReference type="SMART" id="SM00994">
    <property type="entry name" value="zf-C4_ClpX"/>
    <property type="match status" value="1"/>
</dbReference>
<dbReference type="SUPFAM" id="SSF57716">
    <property type="entry name" value="Glucocorticoid receptor-like (DNA-binding domain)"/>
    <property type="match status" value="1"/>
</dbReference>
<dbReference type="SUPFAM" id="SSF52540">
    <property type="entry name" value="P-loop containing nucleoside triphosphate hydrolases"/>
    <property type="match status" value="1"/>
</dbReference>
<dbReference type="PROSITE" id="PS51902">
    <property type="entry name" value="CLPX_ZB"/>
    <property type="match status" value="1"/>
</dbReference>
<gene>
    <name evidence="1" type="primary">clpX</name>
    <name type="ordered locus">RC1_1247</name>
</gene>
<sequence length="421" mass="46216">MTKSTGGDSKNTLYCSFCGKSQHEVRKLIAGPTVFICDECVELCMDIIREENKTTLVKSRDGVPSPRDICAVLDDYVIGQEHAKRVLSVAVHNHYKRLAHGAKHNDVELAKSNILLIGPTGSGKTLLAQTLARIIDVPFTMADATTLTEAGYVGEDVENIILKLLQAADYNVERAQRGIVYIDEVDKISRKSDNPSITRDVSGEGVQQALLKIMEGTVASVPPQGGRKHPQQEFLQVDTTNILFICGGAFAGLERIIAARGKGTSIGFGADVRAPDERRTGDILREVEPEDLLKFGLIPEFVGRLPVVATLHDLDENALIEILTKPKNALVKQYQRLFEMEDVKLGIHEEALRSIAVKAIQRKTGARGLRSIMESILLEPMFDLPGLQGVEEIVINKEVVEGRAKPLYIYSDRRSEVAPGA</sequence>
<reference key="1">
    <citation type="submission" date="2007-03" db="EMBL/GenBank/DDBJ databases">
        <title>Genome sequence of Rhodospirillum centenum.</title>
        <authorList>
            <person name="Touchman J.W."/>
            <person name="Bauer C."/>
            <person name="Blankenship R.E."/>
        </authorList>
    </citation>
    <scope>NUCLEOTIDE SEQUENCE [LARGE SCALE GENOMIC DNA]</scope>
    <source>
        <strain>ATCC 51521 / SW</strain>
    </source>
</reference>
<proteinExistence type="inferred from homology"/>
<keyword id="KW-0067">ATP-binding</keyword>
<keyword id="KW-0143">Chaperone</keyword>
<keyword id="KW-0479">Metal-binding</keyword>
<keyword id="KW-0547">Nucleotide-binding</keyword>
<keyword id="KW-1185">Reference proteome</keyword>
<keyword id="KW-0862">Zinc</keyword>